<accession>A3CSG3</accession>
<organism>
    <name type="scientific">Methanoculleus marisnigri (strain ATCC 35101 / DSM 1498 / JR1)</name>
    <dbReference type="NCBI Taxonomy" id="368407"/>
    <lineage>
        <taxon>Archaea</taxon>
        <taxon>Methanobacteriati</taxon>
        <taxon>Methanobacteriota</taxon>
        <taxon>Stenosarchaea group</taxon>
        <taxon>Methanomicrobia</taxon>
        <taxon>Methanomicrobiales</taxon>
        <taxon>Methanomicrobiaceae</taxon>
        <taxon>Methanoculleus</taxon>
    </lineage>
</organism>
<name>DPO4_METMJ</name>
<gene>
    <name evidence="1" type="primary">dbh</name>
    <name type="ordered locus">Memar_0380</name>
</gene>
<protein>
    <recommendedName>
        <fullName evidence="1">DNA polymerase IV</fullName>
        <shortName evidence="1">Pol IV</shortName>
        <ecNumber evidence="1">2.7.7.7</ecNumber>
    </recommendedName>
</protein>
<reference key="1">
    <citation type="journal article" date="2009" name="Stand. Genomic Sci.">
        <title>Complete genome sequence of Methanoculleus marisnigri Romesser et al. 1981 type strain JR1.</title>
        <authorList>
            <person name="Anderson I.J."/>
            <person name="Sieprawska-Lupa M."/>
            <person name="Lapidus A."/>
            <person name="Nolan M."/>
            <person name="Copeland A."/>
            <person name="Glavina Del Rio T."/>
            <person name="Tice H."/>
            <person name="Dalin E."/>
            <person name="Barry K."/>
            <person name="Saunders E."/>
            <person name="Han C."/>
            <person name="Brettin T."/>
            <person name="Detter J.C."/>
            <person name="Bruce D."/>
            <person name="Mikhailova N."/>
            <person name="Pitluck S."/>
            <person name="Hauser L."/>
            <person name="Land M."/>
            <person name="Lucas S."/>
            <person name="Richardson P."/>
            <person name="Whitman W.B."/>
            <person name="Kyrpides N.C."/>
        </authorList>
    </citation>
    <scope>NUCLEOTIDE SEQUENCE [LARGE SCALE GENOMIC DNA]</scope>
    <source>
        <strain>ATCC 35101 / DSM 1498 / JR1</strain>
    </source>
</reference>
<proteinExistence type="inferred from homology"/>
<comment type="function">
    <text evidence="1">Poorly processive, error-prone DNA polymerase involved in untargeted mutagenesis. Copies undamaged DNA at stalled replication forks, which arise in vivo from mismatched or misaligned primer ends. These misaligned primers can be extended by PolIV. Exhibits no 3'-5' exonuclease (proofreading) activity. May be involved in translesional synthesis.</text>
</comment>
<comment type="catalytic activity">
    <reaction evidence="1">
        <text>DNA(n) + a 2'-deoxyribonucleoside 5'-triphosphate = DNA(n+1) + diphosphate</text>
        <dbReference type="Rhea" id="RHEA:22508"/>
        <dbReference type="Rhea" id="RHEA-COMP:17339"/>
        <dbReference type="Rhea" id="RHEA-COMP:17340"/>
        <dbReference type="ChEBI" id="CHEBI:33019"/>
        <dbReference type="ChEBI" id="CHEBI:61560"/>
        <dbReference type="ChEBI" id="CHEBI:173112"/>
        <dbReference type="EC" id="2.7.7.7"/>
    </reaction>
</comment>
<comment type="cofactor">
    <cofactor evidence="1">
        <name>Mg(2+)</name>
        <dbReference type="ChEBI" id="CHEBI:18420"/>
    </cofactor>
    <text evidence="1">Binds 2 magnesium ions per subunit.</text>
</comment>
<comment type="subunit">
    <text evidence="1">Monomer.</text>
</comment>
<comment type="subcellular location">
    <subcellularLocation>
        <location evidence="1">Cytoplasm</location>
    </subcellularLocation>
</comment>
<comment type="similarity">
    <text evidence="1">Belongs to the DNA polymerase type-Y family.</text>
</comment>
<feature type="chain" id="PRO_1000137142" description="DNA polymerase IV">
    <location>
        <begin position="1"/>
        <end position="360"/>
    </location>
</feature>
<feature type="domain" description="UmuC" evidence="1">
    <location>
        <begin position="8"/>
        <end position="191"/>
    </location>
</feature>
<feature type="active site" evidence="1">
    <location>
        <position position="111"/>
    </location>
</feature>
<feature type="binding site" evidence="1">
    <location>
        <position position="12"/>
    </location>
    <ligand>
        <name>Mg(2+)</name>
        <dbReference type="ChEBI" id="CHEBI:18420"/>
    </ligand>
</feature>
<feature type="binding site" evidence="1">
    <location>
        <position position="110"/>
    </location>
    <ligand>
        <name>Mg(2+)</name>
        <dbReference type="ChEBI" id="CHEBI:18420"/>
    </ligand>
</feature>
<feature type="site" description="Substrate discrimination" evidence="1">
    <location>
        <position position="17"/>
    </location>
</feature>
<dbReference type="EC" id="2.7.7.7" evidence="1"/>
<dbReference type="EMBL" id="CP000562">
    <property type="protein sequence ID" value="ABN56313.1"/>
    <property type="molecule type" value="Genomic_DNA"/>
</dbReference>
<dbReference type="RefSeq" id="WP_011843223.1">
    <property type="nucleotide sequence ID" value="NC_009051.1"/>
</dbReference>
<dbReference type="SMR" id="A3CSG3"/>
<dbReference type="STRING" id="368407.Memar_0380"/>
<dbReference type="GeneID" id="4846121"/>
<dbReference type="KEGG" id="mem:Memar_0380"/>
<dbReference type="eggNOG" id="arCOG04582">
    <property type="taxonomic scope" value="Archaea"/>
</dbReference>
<dbReference type="HOGENOM" id="CLU_012348_1_1_2"/>
<dbReference type="OrthoDB" id="372207at2157"/>
<dbReference type="Proteomes" id="UP000002146">
    <property type="component" value="Chromosome"/>
</dbReference>
<dbReference type="GO" id="GO:0005737">
    <property type="term" value="C:cytoplasm"/>
    <property type="evidence" value="ECO:0007669"/>
    <property type="project" value="UniProtKB-SubCell"/>
</dbReference>
<dbReference type="GO" id="GO:0003684">
    <property type="term" value="F:damaged DNA binding"/>
    <property type="evidence" value="ECO:0007669"/>
    <property type="project" value="InterPro"/>
</dbReference>
<dbReference type="GO" id="GO:0003887">
    <property type="term" value="F:DNA-directed DNA polymerase activity"/>
    <property type="evidence" value="ECO:0007669"/>
    <property type="project" value="UniProtKB-UniRule"/>
</dbReference>
<dbReference type="GO" id="GO:0000287">
    <property type="term" value="F:magnesium ion binding"/>
    <property type="evidence" value="ECO:0007669"/>
    <property type="project" value="UniProtKB-UniRule"/>
</dbReference>
<dbReference type="GO" id="GO:0006261">
    <property type="term" value="P:DNA-templated DNA replication"/>
    <property type="evidence" value="ECO:0007669"/>
    <property type="project" value="UniProtKB-UniRule"/>
</dbReference>
<dbReference type="GO" id="GO:0042276">
    <property type="term" value="P:error-prone translesion synthesis"/>
    <property type="evidence" value="ECO:0007669"/>
    <property type="project" value="TreeGrafter"/>
</dbReference>
<dbReference type="CDD" id="cd03586">
    <property type="entry name" value="PolY_Pol_IV_kappa"/>
    <property type="match status" value="1"/>
</dbReference>
<dbReference type="FunFam" id="3.30.1490.100:FF:000004">
    <property type="entry name" value="DNA polymerase IV"/>
    <property type="match status" value="1"/>
</dbReference>
<dbReference type="Gene3D" id="3.30.70.270">
    <property type="match status" value="1"/>
</dbReference>
<dbReference type="Gene3D" id="3.40.1170.60">
    <property type="match status" value="1"/>
</dbReference>
<dbReference type="Gene3D" id="1.10.150.20">
    <property type="entry name" value="5' to 3' exonuclease, C-terminal subdomain"/>
    <property type="match status" value="1"/>
</dbReference>
<dbReference type="Gene3D" id="3.30.1490.100">
    <property type="entry name" value="DNA polymerase, Y-family, little finger domain"/>
    <property type="match status" value="1"/>
</dbReference>
<dbReference type="HAMAP" id="MF_01113">
    <property type="entry name" value="DNApol_IV"/>
    <property type="match status" value="1"/>
</dbReference>
<dbReference type="InterPro" id="IPR043502">
    <property type="entry name" value="DNA/RNA_pol_sf"/>
</dbReference>
<dbReference type="InterPro" id="IPR036775">
    <property type="entry name" value="DNA_pol_Y-fam_lit_finger_sf"/>
</dbReference>
<dbReference type="InterPro" id="IPR017961">
    <property type="entry name" value="DNA_pol_Y-fam_little_finger"/>
</dbReference>
<dbReference type="InterPro" id="IPR050116">
    <property type="entry name" value="DNA_polymerase-Y"/>
</dbReference>
<dbReference type="InterPro" id="IPR022880">
    <property type="entry name" value="DNApol_IV"/>
</dbReference>
<dbReference type="InterPro" id="IPR024728">
    <property type="entry name" value="PolY_HhH_motif"/>
</dbReference>
<dbReference type="InterPro" id="IPR043128">
    <property type="entry name" value="Rev_trsase/Diguanyl_cyclase"/>
</dbReference>
<dbReference type="InterPro" id="IPR001126">
    <property type="entry name" value="UmuC"/>
</dbReference>
<dbReference type="NCBIfam" id="NF002677">
    <property type="entry name" value="PRK02406.1"/>
    <property type="match status" value="1"/>
</dbReference>
<dbReference type="PANTHER" id="PTHR11076:SF33">
    <property type="entry name" value="DNA POLYMERASE KAPPA"/>
    <property type="match status" value="1"/>
</dbReference>
<dbReference type="PANTHER" id="PTHR11076">
    <property type="entry name" value="DNA REPAIR POLYMERASE UMUC / TRANSFERASE FAMILY MEMBER"/>
    <property type="match status" value="1"/>
</dbReference>
<dbReference type="Pfam" id="PF00817">
    <property type="entry name" value="IMS"/>
    <property type="match status" value="1"/>
</dbReference>
<dbReference type="Pfam" id="PF11799">
    <property type="entry name" value="IMS_C"/>
    <property type="match status" value="1"/>
</dbReference>
<dbReference type="Pfam" id="PF11798">
    <property type="entry name" value="IMS_HHH"/>
    <property type="match status" value="1"/>
</dbReference>
<dbReference type="SUPFAM" id="SSF56672">
    <property type="entry name" value="DNA/RNA polymerases"/>
    <property type="match status" value="1"/>
</dbReference>
<dbReference type="SUPFAM" id="SSF100879">
    <property type="entry name" value="Lesion bypass DNA polymerase (Y-family), little finger domain"/>
    <property type="match status" value="1"/>
</dbReference>
<dbReference type="PROSITE" id="PS50173">
    <property type="entry name" value="UMUC"/>
    <property type="match status" value="1"/>
</dbReference>
<sequence length="360" mass="38565">MTTGSRIVLHVDMDSFFASIEVRRDPSLAGRPVIVGADPKGGAGRGVVSTCSYEARRYGVHSGMPISRAFDLCPHGVYLPVDRPFYASVSVEIMALLSRHAGRIEQVSIDEAYLDVSDAGSFPAAGALAAAIKREVREETGLTCSVGVAPGKAVAKIASDFQKPDGLTIVRPDEVAGFLASLPVGRIPGIGKKTGEDLRQAGILTVGDLARRDVQEVIARLGRSGVRVHHLARGIDDGEVQGREGCKSISRETTFEADTADPPVLAGTLAELADDVAETLRADNLRCRTVTVKVRYRGFQTHTRSRTLPRFTSDPETIRRAASGLLLPFLNGEPVRLIGVRLSMLEGGCTRQASIDEFFS</sequence>
<keyword id="KW-0963">Cytoplasm</keyword>
<keyword id="KW-0227">DNA damage</keyword>
<keyword id="KW-0234">DNA repair</keyword>
<keyword id="KW-0235">DNA replication</keyword>
<keyword id="KW-0238">DNA-binding</keyword>
<keyword id="KW-0239">DNA-directed DNA polymerase</keyword>
<keyword id="KW-0460">Magnesium</keyword>
<keyword id="KW-0479">Metal-binding</keyword>
<keyword id="KW-0515">Mutator protein</keyword>
<keyword id="KW-0548">Nucleotidyltransferase</keyword>
<keyword id="KW-0808">Transferase</keyword>
<evidence type="ECO:0000255" key="1">
    <source>
        <dbReference type="HAMAP-Rule" id="MF_01113"/>
    </source>
</evidence>